<name>GLYA_AZOVD</name>
<protein>
    <recommendedName>
        <fullName evidence="1">Serine hydroxymethyltransferase</fullName>
        <shortName evidence="1">SHMT</shortName>
        <shortName evidence="1">Serine methylase</shortName>
        <ecNumber evidence="1">2.1.2.1</ecNumber>
    </recommendedName>
</protein>
<reference key="1">
    <citation type="journal article" date="2009" name="J. Bacteriol.">
        <title>Genome sequence of Azotobacter vinelandii, an obligate aerobe specialized to support diverse anaerobic metabolic processes.</title>
        <authorList>
            <person name="Setubal J.C."/>
            <person name="Dos Santos P."/>
            <person name="Goldman B.S."/>
            <person name="Ertesvaag H."/>
            <person name="Espin G."/>
            <person name="Rubio L.M."/>
            <person name="Valla S."/>
            <person name="Almeida N.F."/>
            <person name="Balasubramanian D."/>
            <person name="Cromes L."/>
            <person name="Curatti L."/>
            <person name="Du Z."/>
            <person name="Godsy E."/>
            <person name="Goodner B."/>
            <person name="Hellner-Burris K."/>
            <person name="Hernandez J.A."/>
            <person name="Houmiel K."/>
            <person name="Imperial J."/>
            <person name="Kennedy C."/>
            <person name="Larson T.J."/>
            <person name="Latreille P."/>
            <person name="Ligon L.S."/>
            <person name="Lu J."/>
            <person name="Maerk M."/>
            <person name="Miller N.M."/>
            <person name="Norton S."/>
            <person name="O'Carroll I.P."/>
            <person name="Paulsen I."/>
            <person name="Raulfs E.C."/>
            <person name="Roemer R."/>
            <person name="Rosser J."/>
            <person name="Segura D."/>
            <person name="Slater S."/>
            <person name="Stricklin S.L."/>
            <person name="Studholme D.J."/>
            <person name="Sun J."/>
            <person name="Viana C.J."/>
            <person name="Wallin E."/>
            <person name="Wang B."/>
            <person name="Wheeler C."/>
            <person name="Zhu H."/>
            <person name="Dean D.R."/>
            <person name="Dixon R."/>
            <person name="Wood D."/>
        </authorList>
    </citation>
    <scope>NUCLEOTIDE SEQUENCE [LARGE SCALE GENOMIC DNA]</scope>
    <source>
        <strain>DJ / ATCC BAA-1303</strain>
    </source>
</reference>
<dbReference type="EC" id="2.1.2.1" evidence="1"/>
<dbReference type="EMBL" id="CP001157">
    <property type="protein sequence ID" value="ACO80232.1"/>
    <property type="molecule type" value="Genomic_DNA"/>
</dbReference>
<dbReference type="RefSeq" id="WP_012702605.1">
    <property type="nucleotide sequence ID" value="NC_012560.1"/>
</dbReference>
<dbReference type="SMR" id="C1DEQ3"/>
<dbReference type="STRING" id="322710.Avin_40970"/>
<dbReference type="EnsemblBacteria" id="ACO80232">
    <property type="protein sequence ID" value="ACO80232"/>
    <property type="gene ID" value="Avin_40970"/>
</dbReference>
<dbReference type="GeneID" id="88187032"/>
<dbReference type="KEGG" id="avn:Avin_40970"/>
<dbReference type="eggNOG" id="COG0112">
    <property type="taxonomic scope" value="Bacteria"/>
</dbReference>
<dbReference type="HOGENOM" id="CLU_022477_2_1_6"/>
<dbReference type="OrthoDB" id="9803846at2"/>
<dbReference type="UniPathway" id="UPA00193"/>
<dbReference type="UniPathway" id="UPA00288">
    <property type="reaction ID" value="UER01023"/>
</dbReference>
<dbReference type="Proteomes" id="UP000002424">
    <property type="component" value="Chromosome"/>
</dbReference>
<dbReference type="GO" id="GO:0005829">
    <property type="term" value="C:cytosol"/>
    <property type="evidence" value="ECO:0007669"/>
    <property type="project" value="TreeGrafter"/>
</dbReference>
<dbReference type="GO" id="GO:0004372">
    <property type="term" value="F:glycine hydroxymethyltransferase activity"/>
    <property type="evidence" value="ECO:0007669"/>
    <property type="project" value="UniProtKB-UniRule"/>
</dbReference>
<dbReference type="GO" id="GO:0030170">
    <property type="term" value="F:pyridoxal phosphate binding"/>
    <property type="evidence" value="ECO:0007669"/>
    <property type="project" value="UniProtKB-UniRule"/>
</dbReference>
<dbReference type="GO" id="GO:0019264">
    <property type="term" value="P:glycine biosynthetic process from serine"/>
    <property type="evidence" value="ECO:0007669"/>
    <property type="project" value="UniProtKB-UniRule"/>
</dbReference>
<dbReference type="GO" id="GO:0035999">
    <property type="term" value="P:tetrahydrofolate interconversion"/>
    <property type="evidence" value="ECO:0007669"/>
    <property type="project" value="UniProtKB-UniRule"/>
</dbReference>
<dbReference type="CDD" id="cd00378">
    <property type="entry name" value="SHMT"/>
    <property type="match status" value="1"/>
</dbReference>
<dbReference type="FunFam" id="3.40.640.10:FF:000001">
    <property type="entry name" value="Serine hydroxymethyltransferase"/>
    <property type="match status" value="1"/>
</dbReference>
<dbReference type="FunFam" id="3.90.1150.10:FF:000003">
    <property type="entry name" value="Serine hydroxymethyltransferase"/>
    <property type="match status" value="1"/>
</dbReference>
<dbReference type="Gene3D" id="3.90.1150.10">
    <property type="entry name" value="Aspartate Aminotransferase, domain 1"/>
    <property type="match status" value="1"/>
</dbReference>
<dbReference type="Gene3D" id="3.40.640.10">
    <property type="entry name" value="Type I PLP-dependent aspartate aminotransferase-like (Major domain)"/>
    <property type="match status" value="1"/>
</dbReference>
<dbReference type="HAMAP" id="MF_00051">
    <property type="entry name" value="SHMT"/>
    <property type="match status" value="1"/>
</dbReference>
<dbReference type="InterPro" id="IPR015424">
    <property type="entry name" value="PyrdxlP-dep_Trfase"/>
</dbReference>
<dbReference type="InterPro" id="IPR015421">
    <property type="entry name" value="PyrdxlP-dep_Trfase_major"/>
</dbReference>
<dbReference type="InterPro" id="IPR015422">
    <property type="entry name" value="PyrdxlP-dep_Trfase_small"/>
</dbReference>
<dbReference type="InterPro" id="IPR001085">
    <property type="entry name" value="Ser_HO-MeTrfase"/>
</dbReference>
<dbReference type="InterPro" id="IPR049943">
    <property type="entry name" value="Ser_HO-MeTrfase-like"/>
</dbReference>
<dbReference type="InterPro" id="IPR019798">
    <property type="entry name" value="Ser_HO-MeTrfase_PLP_BS"/>
</dbReference>
<dbReference type="InterPro" id="IPR039429">
    <property type="entry name" value="SHMT-like_dom"/>
</dbReference>
<dbReference type="NCBIfam" id="NF000586">
    <property type="entry name" value="PRK00011.1"/>
    <property type="match status" value="1"/>
</dbReference>
<dbReference type="PANTHER" id="PTHR11680">
    <property type="entry name" value="SERINE HYDROXYMETHYLTRANSFERASE"/>
    <property type="match status" value="1"/>
</dbReference>
<dbReference type="PANTHER" id="PTHR11680:SF50">
    <property type="entry name" value="SERINE HYDROXYMETHYLTRANSFERASE"/>
    <property type="match status" value="1"/>
</dbReference>
<dbReference type="Pfam" id="PF00464">
    <property type="entry name" value="SHMT"/>
    <property type="match status" value="1"/>
</dbReference>
<dbReference type="PIRSF" id="PIRSF000412">
    <property type="entry name" value="SHMT"/>
    <property type="match status" value="1"/>
</dbReference>
<dbReference type="SUPFAM" id="SSF53383">
    <property type="entry name" value="PLP-dependent transferases"/>
    <property type="match status" value="1"/>
</dbReference>
<dbReference type="PROSITE" id="PS00096">
    <property type="entry name" value="SHMT"/>
    <property type="match status" value="1"/>
</dbReference>
<sequence>MFSRDLTLARYDAELFAAMKQEAQRQEDHIELIASENYTSPAVMEAQGSVLTNKYAEGYPGKRYYGGCEYVDIVEQLAIDRAKQLFGADYANVQPHAGSQANAAVYQALVKPGDTVLGMSLAHGGHLTHGASVNFSGKMYNAVQYGIDANGFIDYDEVERLALEHKPKMIVAGYSAYSQVLDFARFREIADKVGAYLFVDMAHFAGLVAAGVYPNPVPFADVVTTTTHKTLRGPRGGLILAKANEEIEKKLNSAVFPGGQGGPLEHVIAAKAVCFKEALQPDFKEYQQQVVKNAKAMAQVFIERGFDVVSGGTENHLFLVSLIKQEITGKDADAALGRAFITVNKNSVPNDPRSPFVTSGLRIGTPAVTTRGFKETECRELAGWICDILVDLNNEAVVDGVREKVQAICARFPVYGK</sequence>
<gene>
    <name evidence="1" type="primary">glyA</name>
    <name type="ordered locus">Avin_40970</name>
</gene>
<comment type="function">
    <text evidence="1">Catalyzes the reversible interconversion of serine and glycine with tetrahydrofolate (THF) serving as the one-carbon carrier. This reaction serves as the major source of one-carbon groups required for the biosynthesis of purines, thymidylate, methionine, and other important biomolecules. Also exhibits THF-independent aldolase activity toward beta-hydroxyamino acids, producing glycine and aldehydes, via a retro-aldol mechanism.</text>
</comment>
<comment type="catalytic activity">
    <reaction evidence="1">
        <text>(6R)-5,10-methylene-5,6,7,8-tetrahydrofolate + glycine + H2O = (6S)-5,6,7,8-tetrahydrofolate + L-serine</text>
        <dbReference type="Rhea" id="RHEA:15481"/>
        <dbReference type="ChEBI" id="CHEBI:15377"/>
        <dbReference type="ChEBI" id="CHEBI:15636"/>
        <dbReference type="ChEBI" id="CHEBI:33384"/>
        <dbReference type="ChEBI" id="CHEBI:57305"/>
        <dbReference type="ChEBI" id="CHEBI:57453"/>
        <dbReference type="EC" id="2.1.2.1"/>
    </reaction>
</comment>
<comment type="cofactor">
    <cofactor evidence="1">
        <name>pyridoxal 5'-phosphate</name>
        <dbReference type="ChEBI" id="CHEBI:597326"/>
    </cofactor>
</comment>
<comment type="pathway">
    <text evidence="1">One-carbon metabolism; tetrahydrofolate interconversion.</text>
</comment>
<comment type="pathway">
    <text evidence="1">Amino-acid biosynthesis; glycine biosynthesis; glycine from L-serine: step 1/1.</text>
</comment>
<comment type="subunit">
    <text evidence="1">Homodimer.</text>
</comment>
<comment type="subcellular location">
    <subcellularLocation>
        <location evidence="1">Cytoplasm</location>
    </subcellularLocation>
</comment>
<comment type="similarity">
    <text evidence="1">Belongs to the SHMT family.</text>
</comment>
<proteinExistence type="inferred from homology"/>
<accession>C1DEQ3</accession>
<evidence type="ECO:0000255" key="1">
    <source>
        <dbReference type="HAMAP-Rule" id="MF_00051"/>
    </source>
</evidence>
<feature type="chain" id="PRO_1000202257" description="Serine hydroxymethyltransferase">
    <location>
        <begin position="1"/>
        <end position="417"/>
    </location>
</feature>
<feature type="binding site" evidence="1">
    <location>
        <position position="121"/>
    </location>
    <ligand>
        <name>(6S)-5,6,7,8-tetrahydrofolate</name>
        <dbReference type="ChEBI" id="CHEBI:57453"/>
    </ligand>
</feature>
<feature type="binding site" evidence="1">
    <location>
        <begin position="125"/>
        <end position="127"/>
    </location>
    <ligand>
        <name>(6S)-5,6,7,8-tetrahydrofolate</name>
        <dbReference type="ChEBI" id="CHEBI:57453"/>
    </ligand>
</feature>
<feature type="binding site" evidence="1">
    <location>
        <begin position="354"/>
        <end position="356"/>
    </location>
    <ligand>
        <name>(6S)-5,6,7,8-tetrahydrofolate</name>
        <dbReference type="ChEBI" id="CHEBI:57453"/>
    </ligand>
</feature>
<feature type="site" description="Plays an important role in substrate specificity" evidence="1">
    <location>
        <position position="228"/>
    </location>
</feature>
<feature type="modified residue" description="N6-(pyridoxal phosphate)lysine" evidence="1">
    <location>
        <position position="229"/>
    </location>
</feature>
<organism>
    <name type="scientific">Azotobacter vinelandii (strain DJ / ATCC BAA-1303)</name>
    <dbReference type="NCBI Taxonomy" id="322710"/>
    <lineage>
        <taxon>Bacteria</taxon>
        <taxon>Pseudomonadati</taxon>
        <taxon>Pseudomonadota</taxon>
        <taxon>Gammaproteobacteria</taxon>
        <taxon>Pseudomonadales</taxon>
        <taxon>Pseudomonadaceae</taxon>
        <taxon>Azotobacter</taxon>
    </lineage>
</organism>
<keyword id="KW-0028">Amino-acid biosynthesis</keyword>
<keyword id="KW-0963">Cytoplasm</keyword>
<keyword id="KW-0554">One-carbon metabolism</keyword>
<keyword id="KW-0663">Pyridoxal phosphate</keyword>
<keyword id="KW-0808">Transferase</keyword>